<name>YAII_ECOLC</name>
<organism>
    <name type="scientific">Escherichia coli (strain ATCC 8739 / DSM 1576 / NBRC 3972 / NCIMB 8545 / WDCM 00012 / Crooks)</name>
    <dbReference type="NCBI Taxonomy" id="481805"/>
    <lineage>
        <taxon>Bacteria</taxon>
        <taxon>Pseudomonadati</taxon>
        <taxon>Pseudomonadota</taxon>
        <taxon>Gammaproteobacteria</taxon>
        <taxon>Enterobacterales</taxon>
        <taxon>Enterobacteriaceae</taxon>
        <taxon>Escherichia</taxon>
    </lineage>
</organism>
<protein>
    <recommendedName>
        <fullName evidence="1">UPF0178 protein YaiI</fullName>
    </recommendedName>
</protein>
<dbReference type="EMBL" id="CP000946">
    <property type="protein sequence ID" value="ACA78867.1"/>
    <property type="molecule type" value="Genomic_DNA"/>
</dbReference>
<dbReference type="RefSeq" id="WP_000158153.1">
    <property type="nucleotide sequence ID" value="NZ_MTFT01000010.1"/>
</dbReference>
<dbReference type="KEGG" id="ecl:EcolC_3245"/>
<dbReference type="HOGENOM" id="CLU_106619_1_0_6"/>
<dbReference type="CDD" id="cd18720">
    <property type="entry name" value="PIN_YqxD-like"/>
    <property type="match status" value="1"/>
</dbReference>
<dbReference type="HAMAP" id="MF_00489">
    <property type="entry name" value="UPF0178"/>
    <property type="match status" value="1"/>
</dbReference>
<dbReference type="InterPro" id="IPR003791">
    <property type="entry name" value="UPF0178"/>
</dbReference>
<dbReference type="NCBIfam" id="NF001095">
    <property type="entry name" value="PRK00124.1"/>
    <property type="match status" value="1"/>
</dbReference>
<dbReference type="PANTHER" id="PTHR35146">
    <property type="entry name" value="UPF0178 PROTEIN YAII"/>
    <property type="match status" value="1"/>
</dbReference>
<dbReference type="PANTHER" id="PTHR35146:SF1">
    <property type="entry name" value="UPF0178 PROTEIN YAII"/>
    <property type="match status" value="1"/>
</dbReference>
<dbReference type="Pfam" id="PF02639">
    <property type="entry name" value="DUF188"/>
    <property type="match status" value="1"/>
</dbReference>
<gene>
    <name evidence="1" type="primary">yaiI</name>
    <name type="ordered locus">EcolC_3245</name>
</gene>
<reference key="1">
    <citation type="submission" date="2008-02" db="EMBL/GenBank/DDBJ databases">
        <title>Complete sequence of Escherichia coli C str. ATCC 8739.</title>
        <authorList>
            <person name="Copeland A."/>
            <person name="Lucas S."/>
            <person name="Lapidus A."/>
            <person name="Glavina del Rio T."/>
            <person name="Dalin E."/>
            <person name="Tice H."/>
            <person name="Bruce D."/>
            <person name="Goodwin L."/>
            <person name="Pitluck S."/>
            <person name="Kiss H."/>
            <person name="Brettin T."/>
            <person name="Detter J.C."/>
            <person name="Han C."/>
            <person name="Kuske C.R."/>
            <person name="Schmutz J."/>
            <person name="Larimer F."/>
            <person name="Land M."/>
            <person name="Hauser L."/>
            <person name="Kyrpides N."/>
            <person name="Mikhailova N."/>
            <person name="Ingram L."/>
            <person name="Richardson P."/>
        </authorList>
    </citation>
    <scope>NUCLEOTIDE SEQUENCE [LARGE SCALE GENOMIC DNA]</scope>
    <source>
        <strain>ATCC 8739 / DSM 1576 / NBRC 3972 / NCIMB 8545 / WDCM 00012 / Crooks</strain>
    </source>
</reference>
<sequence length="154" mass="17229">MTIWVDADACPNVIKEILYRAAERMQMPLVLVANQSLRVPPSRFIRTLRVAAGFDVADNEIVRQCEAGDLVITADIPLAAEAIEKGAAAINPRGERYTPATIRERLTMRDFMDTLRASGIQTGGPDSLSQRDRQAFAAELEKWWLEVQRSRGQM</sequence>
<evidence type="ECO:0000255" key="1">
    <source>
        <dbReference type="HAMAP-Rule" id="MF_00489"/>
    </source>
</evidence>
<comment type="similarity">
    <text evidence="1">Belongs to the UPF0178 family.</text>
</comment>
<accession>B1J061</accession>
<feature type="chain" id="PRO_1000081377" description="UPF0178 protein YaiI">
    <location>
        <begin position="1"/>
        <end position="154"/>
    </location>
</feature>
<proteinExistence type="inferred from homology"/>